<reference key="1">
    <citation type="submission" date="2008-01" db="EMBL/GenBank/DDBJ databases">
        <title>NISC comparative sequencing initiative.</title>
        <authorList>
            <person name="Antonellis A."/>
            <person name="Benjamin B."/>
            <person name="Blakesley R.W."/>
            <person name="Bouffard G.G."/>
            <person name="Brinkley C."/>
            <person name="Brooks S."/>
            <person name="Chu G."/>
            <person name="Chub I."/>
            <person name="Coleman H."/>
            <person name="Fuksenko T."/>
            <person name="Gestole M."/>
            <person name="Gregory M."/>
            <person name="Guan X."/>
            <person name="Gupta J."/>
            <person name="Gurson N."/>
            <person name="Han E."/>
            <person name="Han J."/>
            <person name="Hansen N."/>
            <person name="Hargrove A."/>
            <person name="Hines-Harris K."/>
            <person name="Ho S.-L."/>
            <person name="Hu P."/>
            <person name="Hunter G."/>
            <person name="Hurle B."/>
            <person name="Idol J.R."/>
            <person name="Johnson T."/>
            <person name="Knight E."/>
            <person name="Kwong P."/>
            <person name="Lee-Lin S.-Q."/>
            <person name="Legaspi R."/>
            <person name="Madden M."/>
            <person name="Maduro Q.L."/>
            <person name="Maduro V.B."/>
            <person name="Margulies E.H."/>
            <person name="Masiello C."/>
            <person name="Maskeri B."/>
            <person name="McDowell J."/>
            <person name="Merkulov G."/>
            <person name="Montemayor C."/>
            <person name="Mullikin J.C."/>
            <person name="Park M."/>
            <person name="Prasad A."/>
            <person name="Ramsahoye C."/>
            <person name="Reddix-Dugue N."/>
            <person name="Riebow N."/>
            <person name="Schandler K."/>
            <person name="Schueler M.G."/>
            <person name="Sison C."/>
            <person name="Smith L."/>
            <person name="Stantripop S."/>
            <person name="Thomas J.W."/>
            <person name="Thomas P.J."/>
            <person name="Tsipouri V."/>
            <person name="Young A."/>
            <person name="Green E.D."/>
        </authorList>
    </citation>
    <scope>NUCLEOTIDE SEQUENCE [LARGE SCALE GENOMIC DNA]</scope>
</reference>
<comment type="function">
    <text evidence="1">Chaperone protein which promotes assembly of the 20S proteasome as part of a heterodimer with PSMG2. The PSMG1-PSMG2 heterodimer binds to the PSMA5 and PSMA7 proteasome subunits, promotes assembly of the proteasome alpha subunits into the heteroheptameric alpha ring and prevents alpha ring dimerization (By similarity).</text>
</comment>
<comment type="subunit">
    <text evidence="1">Forms a heterodimer with PSMG2. The PSMG1-PSMG2 heterodimer interacts directly with the PSMA5 and PSMA7 proteasome alpha subunits (By similarity).</text>
</comment>
<comment type="subcellular location">
    <subcellularLocation>
        <location evidence="1">Cytoplasm</location>
    </subcellularLocation>
    <subcellularLocation>
        <location evidence="1">Endoplasmic reticulum</location>
    </subcellularLocation>
</comment>
<comment type="PTM">
    <text evidence="1">Degraded by the proteasome upon completion of 20S proteasome maturation.</text>
</comment>
<comment type="similarity">
    <text evidence="4">Belongs to the PSMG1 family.</text>
</comment>
<feature type="initiator methionine" description="Removed" evidence="2">
    <location>
        <position position="1"/>
    </location>
</feature>
<feature type="chain" id="PRO_0000329455" description="Proteasome assembly chaperone 1">
    <location>
        <begin position="2"/>
        <end position="290"/>
    </location>
</feature>
<feature type="region of interest" description="Disordered" evidence="3">
    <location>
        <begin position="1"/>
        <end position="39"/>
    </location>
</feature>
<feature type="compositionally biased region" description="Basic and acidic residues" evidence="3">
    <location>
        <begin position="28"/>
        <end position="39"/>
    </location>
</feature>
<feature type="modified residue" description="N-acetylalanine" evidence="2">
    <location>
        <position position="2"/>
    </location>
</feature>
<feature type="modified residue" description="Phosphothreonine" evidence="2">
    <location>
        <position position="18"/>
    </location>
</feature>
<feature type="modified residue" description="Phosphothreonine" evidence="2">
    <location>
        <position position="56"/>
    </location>
</feature>
<feature type="modified residue" description="Phosphoserine" evidence="2">
    <location>
        <position position="182"/>
    </location>
</feature>
<feature type="modified residue" description="N6-acetyllysine" evidence="2">
    <location>
        <position position="266"/>
    </location>
</feature>
<keyword id="KW-0007">Acetylation</keyword>
<keyword id="KW-0143">Chaperone</keyword>
<keyword id="KW-0963">Cytoplasm</keyword>
<keyword id="KW-0256">Endoplasmic reticulum</keyword>
<keyword id="KW-0597">Phosphoprotein</keyword>
<keyword id="KW-1185">Reference proteome</keyword>
<sequence>MAATFFGEVVKAPCRAGTEDEEEEEEEEGRRETPEDREVRQQLARKREVRLLRRQTKTSLEVSLLEKYPCSKFIIAIGNNAVAFLSSFVMNSGVWEEVGCAKLWNEWCRTADTTHLSSTEAFCGFYHLKSNPSVFLCQCSCYVAEDQQYQWLEKVFGSCPRKNMQITILTCRHVTDYKTLESTGSLPSPFLKALKTQNFKDPACCPLLEQPNIVHDLPAAVLSYCQVWKIPAILYLCYTDVMKLDLITVEAFKPILSTRSLKGLVKNISQSTEILKKLMTTNEIQSNIYT</sequence>
<evidence type="ECO:0000250" key="1"/>
<evidence type="ECO:0000250" key="2">
    <source>
        <dbReference type="UniProtKB" id="O95456"/>
    </source>
</evidence>
<evidence type="ECO:0000256" key="3">
    <source>
        <dbReference type="SAM" id="MobiDB-lite"/>
    </source>
</evidence>
<evidence type="ECO:0000305" key="4"/>
<organism>
    <name type="scientific">Papio anubis</name>
    <name type="common">Olive baboon</name>
    <dbReference type="NCBI Taxonomy" id="9555"/>
    <lineage>
        <taxon>Eukaryota</taxon>
        <taxon>Metazoa</taxon>
        <taxon>Chordata</taxon>
        <taxon>Craniata</taxon>
        <taxon>Vertebrata</taxon>
        <taxon>Euteleostomi</taxon>
        <taxon>Mammalia</taxon>
        <taxon>Eutheria</taxon>
        <taxon>Euarchontoglires</taxon>
        <taxon>Primates</taxon>
        <taxon>Haplorrhini</taxon>
        <taxon>Catarrhini</taxon>
        <taxon>Cercopithecidae</taxon>
        <taxon>Cercopithecinae</taxon>
        <taxon>Papio</taxon>
    </lineage>
</organism>
<protein>
    <recommendedName>
        <fullName>Proteasome assembly chaperone 1</fullName>
    </recommendedName>
</protein>
<gene>
    <name type="primary">PSMG1</name>
</gene>
<name>PSMG1_PAPAN</name>
<accession>B0CM32</accession>
<dbReference type="EMBL" id="DP000537">
    <property type="protein sequence ID" value="ABY63624.1"/>
    <property type="molecule type" value="Genomic_DNA"/>
</dbReference>
<dbReference type="RefSeq" id="NP_001162555.1">
    <property type="nucleotide sequence ID" value="NM_001169084.1"/>
</dbReference>
<dbReference type="SMR" id="B0CM32"/>
<dbReference type="STRING" id="9555.ENSPANP00000012973"/>
<dbReference type="GeneID" id="100137593"/>
<dbReference type="KEGG" id="panu:100137593"/>
<dbReference type="CTD" id="8624"/>
<dbReference type="eggNOG" id="ENOG502QTPH">
    <property type="taxonomic scope" value="Eukaryota"/>
</dbReference>
<dbReference type="OrthoDB" id="9889at314294"/>
<dbReference type="Proteomes" id="UP000028761">
    <property type="component" value="Unplaced"/>
</dbReference>
<dbReference type="GO" id="GO:0005783">
    <property type="term" value="C:endoplasmic reticulum"/>
    <property type="evidence" value="ECO:0007669"/>
    <property type="project" value="UniProtKB-SubCell"/>
</dbReference>
<dbReference type="GO" id="GO:0070628">
    <property type="term" value="F:proteasome binding"/>
    <property type="evidence" value="ECO:0007669"/>
    <property type="project" value="TreeGrafter"/>
</dbReference>
<dbReference type="GO" id="GO:0080129">
    <property type="term" value="P:proteasome core complex assembly"/>
    <property type="evidence" value="ECO:0007669"/>
    <property type="project" value="TreeGrafter"/>
</dbReference>
<dbReference type="InterPro" id="IPR016565">
    <property type="entry name" value="Proteasome_assmbl_chp_1"/>
</dbReference>
<dbReference type="PANTHER" id="PTHR15069">
    <property type="entry name" value="PROTEASOME ASSEMBLY CHAPERONE 1"/>
    <property type="match status" value="1"/>
</dbReference>
<dbReference type="PANTHER" id="PTHR15069:SF1">
    <property type="entry name" value="PROTEASOME ASSEMBLY CHAPERONE 1"/>
    <property type="match status" value="1"/>
</dbReference>
<dbReference type="Pfam" id="PF16094">
    <property type="entry name" value="PAC1"/>
    <property type="match status" value="1"/>
</dbReference>
<dbReference type="PIRSF" id="PIRSF010076">
    <property type="entry name" value="Psome_chaperone-1"/>
    <property type="match status" value="1"/>
</dbReference>
<proteinExistence type="inferred from homology"/>